<organism>
    <name type="scientific">Sulfurovum sp. (strain NBC37-1)</name>
    <dbReference type="NCBI Taxonomy" id="387093"/>
    <lineage>
        <taxon>Bacteria</taxon>
        <taxon>Pseudomonadati</taxon>
        <taxon>Campylobacterota</taxon>
        <taxon>Epsilonproteobacteria</taxon>
        <taxon>Campylobacterales</taxon>
        <taxon>Sulfurovaceae</taxon>
        <taxon>Sulfurovum</taxon>
    </lineage>
</organism>
<dbReference type="EMBL" id="AP009179">
    <property type="protein sequence ID" value="BAF71042.1"/>
    <property type="molecule type" value="Genomic_DNA"/>
</dbReference>
<dbReference type="RefSeq" id="WP_011979775.1">
    <property type="nucleotide sequence ID" value="NC_009663.1"/>
</dbReference>
<dbReference type="SMR" id="A6Q6D3"/>
<dbReference type="STRING" id="387093.SUN_0082"/>
<dbReference type="KEGG" id="sun:SUN_0082"/>
<dbReference type="eggNOG" id="COG0468">
    <property type="taxonomic scope" value="Bacteria"/>
</dbReference>
<dbReference type="HOGENOM" id="CLU_040469_1_2_7"/>
<dbReference type="OrthoDB" id="9776733at2"/>
<dbReference type="Proteomes" id="UP000006378">
    <property type="component" value="Chromosome"/>
</dbReference>
<dbReference type="GO" id="GO:0005829">
    <property type="term" value="C:cytosol"/>
    <property type="evidence" value="ECO:0007669"/>
    <property type="project" value="TreeGrafter"/>
</dbReference>
<dbReference type="GO" id="GO:0005524">
    <property type="term" value="F:ATP binding"/>
    <property type="evidence" value="ECO:0007669"/>
    <property type="project" value="UniProtKB-UniRule"/>
</dbReference>
<dbReference type="GO" id="GO:0016887">
    <property type="term" value="F:ATP hydrolysis activity"/>
    <property type="evidence" value="ECO:0007669"/>
    <property type="project" value="InterPro"/>
</dbReference>
<dbReference type="GO" id="GO:0140664">
    <property type="term" value="F:ATP-dependent DNA damage sensor activity"/>
    <property type="evidence" value="ECO:0007669"/>
    <property type="project" value="InterPro"/>
</dbReference>
<dbReference type="GO" id="GO:0003684">
    <property type="term" value="F:damaged DNA binding"/>
    <property type="evidence" value="ECO:0007669"/>
    <property type="project" value="UniProtKB-UniRule"/>
</dbReference>
<dbReference type="GO" id="GO:0003697">
    <property type="term" value="F:single-stranded DNA binding"/>
    <property type="evidence" value="ECO:0007669"/>
    <property type="project" value="UniProtKB-UniRule"/>
</dbReference>
<dbReference type="GO" id="GO:0006310">
    <property type="term" value="P:DNA recombination"/>
    <property type="evidence" value="ECO:0007669"/>
    <property type="project" value="UniProtKB-UniRule"/>
</dbReference>
<dbReference type="GO" id="GO:0006281">
    <property type="term" value="P:DNA repair"/>
    <property type="evidence" value="ECO:0007669"/>
    <property type="project" value="UniProtKB-UniRule"/>
</dbReference>
<dbReference type="GO" id="GO:0009432">
    <property type="term" value="P:SOS response"/>
    <property type="evidence" value="ECO:0007669"/>
    <property type="project" value="UniProtKB-UniRule"/>
</dbReference>
<dbReference type="CDD" id="cd00983">
    <property type="entry name" value="RecA"/>
    <property type="match status" value="1"/>
</dbReference>
<dbReference type="FunFam" id="3.40.50.300:FF:000087">
    <property type="entry name" value="Recombinase RecA"/>
    <property type="match status" value="1"/>
</dbReference>
<dbReference type="Gene3D" id="3.40.50.300">
    <property type="entry name" value="P-loop containing nucleotide triphosphate hydrolases"/>
    <property type="match status" value="1"/>
</dbReference>
<dbReference type="HAMAP" id="MF_00268">
    <property type="entry name" value="RecA"/>
    <property type="match status" value="1"/>
</dbReference>
<dbReference type="InterPro" id="IPR003593">
    <property type="entry name" value="AAA+_ATPase"/>
</dbReference>
<dbReference type="InterPro" id="IPR013765">
    <property type="entry name" value="DNA_recomb/repair_RecA"/>
</dbReference>
<dbReference type="InterPro" id="IPR027417">
    <property type="entry name" value="P-loop_NTPase"/>
</dbReference>
<dbReference type="InterPro" id="IPR049261">
    <property type="entry name" value="RecA-like_C"/>
</dbReference>
<dbReference type="InterPro" id="IPR049428">
    <property type="entry name" value="RecA-like_N"/>
</dbReference>
<dbReference type="InterPro" id="IPR020588">
    <property type="entry name" value="RecA_ATP-bd"/>
</dbReference>
<dbReference type="InterPro" id="IPR023400">
    <property type="entry name" value="RecA_C_sf"/>
</dbReference>
<dbReference type="InterPro" id="IPR020587">
    <property type="entry name" value="RecA_monomer-monomer_interface"/>
</dbReference>
<dbReference type="NCBIfam" id="TIGR02012">
    <property type="entry name" value="tigrfam_recA"/>
    <property type="match status" value="1"/>
</dbReference>
<dbReference type="PANTHER" id="PTHR45900:SF1">
    <property type="entry name" value="MITOCHONDRIAL DNA REPAIR PROTEIN RECA HOMOLOG-RELATED"/>
    <property type="match status" value="1"/>
</dbReference>
<dbReference type="PANTHER" id="PTHR45900">
    <property type="entry name" value="RECA"/>
    <property type="match status" value="1"/>
</dbReference>
<dbReference type="Pfam" id="PF00154">
    <property type="entry name" value="RecA"/>
    <property type="match status" value="1"/>
</dbReference>
<dbReference type="Pfam" id="PF21096">
    <property type="entry name" value="RecA_C"/>
    <property type="match status" value="1"/>
</dbReference>
<dbReference type="PRINTS" id="PR00142">
    <property type="entry name" value="RECA"/>
</dbReference>
<dbReference type="SMART" id="SM00382">
    <property type="entry name" value="AAA"/>
    <property type="match status" value="1"/>
</dbReference>
<dbReference type="SUPFAM" id="SSF52540">
    <property type="entry name" value="P-loop containing nucleoside triphosphate hydrolases"/>
    <property type="match status" value="1"/>
</dbReference>
<dbReference type="SUPFAM" id="SSF54752">
    <property type="entry name" value="RecA protein, C-terminal domain"/>
    <property type="match status" value="1"/>
</dbReference>
<dbReference type="PROSITE" id="PS50162">
    <property type="entry name" value="RECA_2"/>
    <property type="match status" value="1"/>
</dbReference>
<dbReference type="PROSITE" id="PS50163">
    <property type="entry name" value="RECA_3"/>
    <property type="match status" value="1"/>
</dbReference>
<reference key="1">
    <citation type="journal article" date="2007" name="Proc. Natl. Acad. Sci. U.S.A.">
        <title>Deep-sea vent epsilon-proteobacterial genomes provide insights into emergence of pathogens.</title>
        <authorList>
            <person name="Nakagawa S."/>
            <person name="Takaki Y."/>
            <person name="Shimamura S."/>
            <person name="Reysenbach A.-L."/>
            <person name="Takai K."/>
            <person name="Horikoshi K."/>
        </authorList>
    </citation>
    <scope>NUCLEOTIDE SEQUENCE [LARGE SCALE GENOMIC DNA]</scope>
    <source>
        <strain>NBC37-1</strain>
    </source>
</reference>
<name>RECA_SULNB</name>
<proteinExistence type="inferred from homology"/>
<sequence>MAMDAQKQKALDMAIKQIDKTFGKGTLMRLGDKEFEPIAAISTGSLGLDMALGIGGIPQGRIVEVYGPESSGKTTLALQTIASAQKEGMVCAFIDAEHALDVVYAKNLGVDTDNLLVSQPDFGEQALDVLETLTRSGAVDLIIVDSVAALTPKSEIEGDMGDTHVGLQARLMSQALRKLTAILHKTNTTVIFINQIRMKIGTMGYGSPETTTGGNALKFYCSVRIDVRRIATLKQGESQIGNRVKAKVVKNKVAPPFRQAEFDIMFGEGISYIGELIDYGIKMDIVDKSGAWFSYGAEKLGQGKENAKLTLKENPKLREEIEMQVKEALGFGEALGMDQEEISSADQ</sequence>
<evidence type="ECO:0000255" key="1">
    <source>
        <dbReference type="HAMAP-Rule" id="MF_00268"/>
    </source>
</evidence>
<keyword id="KW-0067">ATP-binding</keyword>
<keyword id="KW-0963">Cytoplasm</keyword>
<keyword id="KW-0227">DNA damage</keyword>
<keyword id="KW-0233">DNA recombination</keyword>
<keyword id="KW-0234">DNA repair</keyword>
<keyword id="KW-0238">DNA-binding</keyword>
<keyword id="KW-0547">Nucleotide-binding</keyword>
<keyword id="KW-0742">SOS response</keyword>
<protein>
    <recommendedName>
        <fullName evidence="1">Protein RecA</fullName>
    </recommendedName>
    <alternativeName>
        <fullName evidence="1">Recombinase A</fullName>
    </alternativeName>
</protein>
<accession>A6Q6D3</accession>
<feature type="chain" id="PRO_1000048019" description="Protein RecA">
    <location>
        <begin position="1"/>
        <end position="347"/>
    </location>
</feature>
<feature type="binding site" evidence="1">
    <location>
        <begin position="67"/>
        <end position="74"/>
    </location>
    <ligand>
        <name>ATP</name>
        <dbReference type="ChEBI" id="CHEBI:30616"/>
    </ligand>
</feature>
<comment type="function">
    <text evidence="1">Can catalyze the hydrolysis of ATP in the presence of single-stranded DNA, the ATP-dependent uptake of single-stranded DNA by duplex DNA, and the ATP-dependent hybridization of homologous single-stranded DNAs. It interacts with LexA causing its activation and leading to its autocatalytic cleavage.</text>
</comment>
<comment type="subcellular location">
    <subcellularLocation>
        <location evidence="1">Cytoplasm</location>
    </subcellularLocation>
</comment>
<comment type="similarity">
    <text evidence="1">Belongs to the RecA family.</text>
</comment>
<gene>
    <name evidence="1" type="primary">recA</name>
    <name type="ordered locus">SUN_0082</name>
</gene>